<feature type="chain" id="PRO_0000098783" description="Tryptophan synthase alpha chain">
    <location>
        <begin position="1"/>
        <end position="268"/>
    </location>
</feature>
<feature type="active site" description="Proton acceptor" evidence="1">
    <location>
        <position position="40"/>
    </location>
</feature>
<feature type="active site" description="Proton acceptor" evidence="1">
    <location>
        <position position="51"/>
    </location>
</feature>
<sequence>MPLSVNPPLFIPFIVAGDPAPDVTIDLALALEEAGADILELGVPYSDPLADGPTIQRAAARALDGGMTLPKAIQLIGEMRKKGVNIPIILFTYYNPVLQLGEESFFALARENGADGVLIPDLPFEESGPLRELGERFGLPLISLVAPTSKQRIERIASAAQGFLYCVSSLGVTGVRETLPETLGDFLREVKRHSRVPVAVGFGISAPEQVAMLKEVCDGVVVGSALVQKVEQLAPRLQTPDEREAAVAEFAAYARSLAAPLREAYSSR</sequence>
<evidence type="ECO:0000255" key="1">
    <source>
        <dbReference type="HAMAP-Rule" id="MF_00131"/>
    </source>
</evidence>
<name>TRPA_GEOKA</name>
<gene>
    <name evidence="1" type="primary">trpA</name>
    <name type="ordered locus">GK2199</name>
</gene>
<organism>
    <name type="scientific">Geobacillus kaustophilus (strain HTA426)</name>
    <dbReference type="NCBI Taxonomy" id="235909"/>
    <lineage>
        <taxon>Bacteria</taxon>
        <taxon>Bacillati</taxon>
        <taxon>Bacillota</taxon>
        <taxon>Bacilli</taxon>
        <taxon>Bacillales</taxon>
        <taxon>Anoxybacillaceae</taxon>
        <taxon>Geobacillus</taxon>
        <taxon>Geobacillus thermoleovorans group</taxon>
    </lineage>
</organism>
<protein>
    <recommendedName>
        <fullName evidence="1">Tryptophan synthase alpha chain</fullName>
        <ecNumber evidence="1">4.2.1.20</ecNumber>
    </recommendedName>
</protein>
<dbReference type="EC" id="4.2.1.20" evidence="1"/>
<dbReference type="EMBL" id="BA000043">
    <property type="protein sequence ID" value="BAD76484.1"/>
    <property type="molecule type" value="Genomic_DNA"/>
</dbReference>
<dbReference type="RefSeq" id="WP_011231684.1">
    <property type="nucleotide sequence ID" value="NC_006510.1"/>
</dbReference>
<dbReference type="SMR" id="Q5KXV2"/>
<dbReference type="STRING" id="235909.GK2199"/>
<dbReference type="KEGG" id="gka:GK2199"/>
<dbReference type="PATRIC" id="fig|235909.7.peg.2354"/>
<dbReference type="eggNOG" id="COG0159">
    <property type="taxonomic scope" value="Bacteria"/>
</dbReference>
<dbReference type="HOGENOM" id="CLU_016734_0_0_9"/>
<dbReference type="UniPathway" id="UPA00035">
    <property type="reaction ID" value="UER00044"/>
</dbReference>
<dbReference type="Proteomes" id="UP000001172">
    <property type="component" value="Chromosome"/>
</dbReference>
<dbReference type="GO" id="GO:0005829">
    <property type="term" value="C:cytosol"/>
    <property type="evidence" value="ECO:0007669"/>
    <property type="project" value="TreeGrafter"/>
</dbReference>
<dbReference type="GO" id="GO:0004834">
    <property type="term" value="F:tryptophan synthase activity"/>
    <property type="evidence" value="ECO:0007669"/>
    <property type="project" value="UniProtKB-UniRule"/>
</dbReference>
<dbReference type="CDD" id="cd04724">
    <property type="entry name" value="Tryptophan_synthase_alpha"/>
    <property type="match status" value="1"/>
</dbReference>
<dbReference type="FunFam" id="3.20.20.70:FF:000037">
    <property type="entry name" value="Tryptophan synthase alpha chain"/>
    <property type="match status" value="1"/>
</dbReference>
<dbReference type="Gene3D" id="3.20.20.70">
    <property type="entry name" value="Aldolase class I"/>
    <property type="match status" value="1"/>
</dbReference>
<dbReference type="HAMAP" id="MF_00131">
    <property type="entry name" value="Trp_synth_alpha"/>
    <property type="match status" value="1"/>
</dbReference>
<dbReference type="InterPro" id="IPR013785">
    <property type="entry name" value="Aldolase_TIM"/>
</dbReference>
<dbReference type="InterPro" id="IPR011060">
    <property type="entry name" value="RibuloseP-bd_barrel"/>
</dbReference>
<dbReference type="InterPro" id="IPR018204">
    <property type="entry name" value="Trp_synthase_alpha_AS"/>
</dbReference>
<dbReference type="InterPro" id="IPR002028">
    <property type="entry name" value="Trp_synthase_suA"/>
</dbReference>
<dbReference type="NCBIfam" id="TIGR00262">
    <property type="entry name" value="trpA"/>
    <property type="match status" value="1"/>
</dbReference>
<dbReference type="PANTHER" id="PTHR43406:SF1">
    <property type="entry name" value="TRYPTOPHAN SYNTHASE ALPHA CHAIN, CHLOROPLASTIC"/>
    <property type="match status" value="1"/>
</dbReference>
<dbReference type="PANTHER" id="PTHR43406">
    <property type="entry name" value="TRYPTOPHAN SYNTHASE, ALPHA CHAIN"/>
    <property type="match status" value="1"/>
</dbReference>
<dbReference type="Pfam" id="PF00290">
    <property type="entry name" value="Trp_syntA"/>
    <property type="match status" value="1"/>
</dbReference>
<dbReference type="SUPFAM" id="SSF51366">
    <property type="entry name" value="Ribulose-phoshate binding barrel"/>
    <property type="match status" value="1"/>
</dbReference>
<dbReference type="PROSITE" id="PS00167">
    <property type="entry name" value="TRP_SYNTHASE_ALPHA"/>
    <property type="match status" value="1"/>
</dbReference>
<accession>Q5KXV2</accession>
<keyword id="KW-0028">Amino-acid biosynthesis</keyword>
<keyword id="KW-0057">Aromatic amino acid biosynthesis</keyword>
<keyword id="KW-0456">Lyase</keyword>
<keyword id="KW-1185">Reference proteome</keyword>
<keyword id="KW-0822">Tryptophan biosynthesis</keyword>
<proteinExistence type="inferred from homology"/>
<reference key="1">
    <citation type="journal article" date="2004" name="Nucleic Acids Res.">
        <title>Thermoadaptation trait revealed by the genome sequence of thermophilic Geobacillus kaustophilus.</title>
        <authorList>
            <person name="Takami H."/>
            <person name="Takaki Y."/>
            <person name="Chee G.-J."/>
            <person name="Nishi S."/>
            <person name="Shimamura S."/>
            <person name="Suzuki H."/>
            <person name="Matsui S."/>
            <person name="Uchiyama I."/>
        </authorList>
    </citation>
    <scope>NUCLEOTIDE SEQUENCE [LARGE SCALE GENOMIC DNA]</scope>
    <source>
        <strain>HTA426</strain>
    </source>
</reference>
<comment type="function">
    <text evidence="1">The alpha subunit is responsible for the aldol cleavage of indoleglycerol phosphate to indole and glyceraldehyde 3-phosphate.</text>
</comment>
<comment type="catalytic activity">
    <reaction evidence="1">
        <text>(1S,2R)-1-C-(indol-3-yl)glycerol 3-phosphate + L-serine = D-glyceraldehyde 3-phosphate + L-tryptophan + H2O</text>
        <dbReference type="Rhea" id="RHEA:10532"/>
        <dbReference type="ChEBI" id="CHEBI:15377"/>
        <dbReference type="ChEBI" id="CHEBI:33384"/>
        <dbReference type="ChEBI" id="CHEBI:57912"/>
        <dbReference type="ChEBI" id="CHEBI:58866"/>
        <dbReference type="ChEBI" id="CHEBI:59776"/>
        <dbReference type="EC" id="4.2.1.20"/>
    </reaction>
</comment>
<comment type="pathway">
    <text evidence="1">Amino-acid biosynthesis; L-tryptophan biosynthesis; L-tryptophan from chorismate: step 5/5.</text>
</comment>
<comment type="subunit">
    <text evidence="1">Tetramer of two alpha and two beta chains.</text>
</comment>
<comment type="similarity">
    <text evidence="1">Belongs to the TrpA family.</text>
</comment>